<comment type="function">
    <text evidence="1">Catalyzes the condensation of the acetyl group of acetyl-CoA with 3-methyl-2-oxobutanoate (2-ketoisovalerate) to form 3-carboxy-3-hydroxy-4-methylpentanoate (2-isopropylmalate).</text>
</comment>
<comment type="catalytic activity">
    <reaction evidence="1">
        <text>3-methyl-2-oxobutanoate + acetyl-CoA + H2O = (2S)-2-isopropylmalate + CoA + H(+)</text>
        <dbReference type="Rhea" id="RHEA:21524"/>
        <dbReference type="ChEBI" id="CHEBI:1178"/>
        <dbReference type="ChEBI" id="CHEBI:11851"/>
        <dbReference type="ChEBI" id="CHEBI:15377"/>
        <dbReference type="ChEBI" id="CHEBI:15378"/>
        <dbReference type="ChEBI" id="CHEBI:57287"/>
        <dbReference type="ChEBI" id="CHEBI:57288"/>
        <dbReference type="EC" id="2.3.3.13"/>
    </reaction>
</comment>
<comment type="cofactor">
    <cofactor evidence="1">
        <name>Mn(2+)</name>
        <dbReference type="ChEBI" id="CHEBI:29035"/>
    </cofactor>
</comment>
<comment type="pathway">
    <text evidence="1">Amino-acid biosynthesis; L-leucine biosynthesis; L-leucine from 3-methyl-2-oxobutanoate: step 1/4.</text>
</comment>
<comment type="subunit">
    <text evidence="1">Homodimer.</text>
</comment>
<comment type="subcellular location">
    <subcellularLocation>
        <location evidence="1">Cytoplasm</location>
    </subcellularLocation>
</comment>
<comment type="similarity">
    <text evidence="1">Belongs to the alpha-IPM synthase/homocitrate synthase family. LeuA type 1 subfamily.</text>
</comment>
<feature type="chain" id="PRO_1000149335" description="2-isopropylmalate synthase">
    <location>
        <begin position="1"/>
        <end position="520"/>
    </location>
</feature>
<feature type="domain" description="Pyruvate carboxyltransferase" evidence="1">
    <location>
        <begin position="12"/>
        <end position="274"/>
    </location>
</feature>
<feature type="region of interest" description="Regulatory domain" evidence="1">
    <location>
        <begin position="396"/>
        <end position="520"/>
    </location>
</feature>
<feature type="binding site" evidence="1">
    <location>
        <position position="21"/>
    </location>
    <ligand>
        <name>Mn(2+)</name>
        <dbReference type="ChEBI" id="CHEBI:29035"/>
    </ligand>
</feature>
<feature type="binding site" evidence="1">
    <location>
        <position position="209"/>
    </location>
    <ligand>
        <name>Mn(2+)</name>
        <dbReference type="ChEBI" id="CHEBI:29035"/>
    </ligand>
</feature>
<feature type="binding site" evidence="1">
    <location>
        <position position="211"/>
    </location>
    <ligand>
        <name>Mn(2+)</name>
        <dbReference type="ChEBI" id="CHEBI:29035"/>
    </ligand>
</feature>
<feature type="binding site" evidence="1">
    <location>
        <position position="245"/>
    </location>
    <ligand>
        <name>Mn(2+)</name>
        <dbReference type="ChEBI" id="CHEBI:29035"/>
    </ligand>
</feature>
<dbReference type="EC" id="2.3.3.13" evidence="1"/>
<dbReference type="EMBL" id="AP008229">
    <property type="protein sequence ID" value="BAE67616.1"/>
    <property type="molecule type" value="Genomic_DNA"/>
</dbReference>
<dbReference type="RefSeq" id="WP_011407690.1">
    <property type="nucleotide sequence ID" value="NC_007705.1"/>
</dbReference>
<dbReference type="SMR" id="Q2P761"/>
<dbReference type="KEGG" id="xom:XOO0861"/>
<dbReference type="HOGENOM" id="CLU_022158_0_1_6"/>
<dbReference type="UniPathway" id="UPA00048">
    <property type="reaction ID" value="UER00070"/>
</dbReference>
<dbReference type="GO" id="GO:0005829">
    <property type="term" value="C:cytosol"/>
    <property type="evidence" value="ECO:0007669"/>
    <property type="project" value="TreeGrafter"/>
</dbReference>
<dbReference type="GO" id="GO:0003852">
    <property type="term" value="F:2-isopropylmalate synthase activity"/>
    <property type="evidence" value="ECO:0007669"/>
    <property type="project" value="UniProtKB-UniRule"/>
</dbReference>
<dbReference type="GO" id="GO:0003985">
    <property type="term" value="F:acetyl-CoA C-acetyltransferase activity"/>
    <property type="evidence" value="ECO:0007669"/>
    <property type="project" value="UniProtKB-UniRule"/>
</dbReference>
<dbReference type="GO" id="GO:0030145">
    <property type="term" value="F:manganese ion binding"/>
    <property type="evidence" value="ECO:0007669"/>
    <property type="project" value="UniProtKB-UniRule"/>
</dbReference>
<dbReference type="GO" id="GO:0009098">
    <property type="term" value="P:L-leucine biosynthetic process"/>
    <property type="evidence" value="ECO:0007669"/>
    <property type="project" value="UniProtKB-UniRule"/>
</dbReference>
<dbReference type="CDD" id="cd07940">
    <property type="entry name" value="DRE_TIM_IPMS"/>
    <property type="match status" value="1"/>
</dbReference>
<dbReference type="FunFam" id="1.10.238.260:FF:000001">
    <property type="entry name" value="2-isopropylmalate synthase"/>
    <property type="match status" value="1"/>
</dbReference>
<dbReference type="FunFam" id="3.20.20.70:FF:000010">
    <property type="entry name" value="2-isopropylmalate synthase"/>
    <property type="match status" value="1"/>
</dbReference>
<dbReference type="FunFam" id="3.30.160.270:FF:000003">
    <property type="entry name" value="2-isopropylmalate synthase"/>
    <property type="match status" value="1"/>
</dbReference>
<dbReference type="Gene3D" id="1.10.238.260">
    <property type="match status" value="1"/>
</dbReference>
<dbReference type="Gene3D" id="3.30.160.270">
    <property type="match status" value="1"/>
</dbReference>
<dbReference type="Gene3D" id="3.20.20.70">
    <property type="entry name" value="Aldolase class I"/>
    <property type="match status" value="1"/>
</dbReference>
<dbReference type="HAMAP" id="MF_01025">
    <property type="entry name" value="LeuA_type1"/>
    <property type="match status" value="1"/>
</dbReference>
<dbReference type="InterPro" id="IPR050073">
    <property type="entry name" value="2-IPM_HCS-like"/>
</dbReference>
<dbReference type="InterPro" id="IPR013709">
    <property type="entry name" value="2-isopropylmalate_synth_dimer"/>
</dbReference>
<dbReference type="InterPro" id="IPR002034">
    <property type="entry name" value="AIPM/Hcit_synth_CS"/>
</dbReference>
<dbReference type="InterPro" id="IPR013785">
    <property type="entry name" value="Aldolase_TIM"/>
</dbReference>
<dbReference type="InterPro" id="IPR054691">
    <property type="entry name" value="LeuA/HCS_post-cat"/>
</dbReference>
<dbReference type="InterPro" id="IPR036230">
    <property type="entry name" value="LeuA_allosteric_dom_sf"/>
</dbReference>
<dbReference type="InterPro" id="IPR005671">
    <property type="entry name" value="LeuA_bact_synth"/>
</dbReference>
<dbReference type="InterPro" id="IPR000891">
    <property type="entry name" value="PYR_CT"/>
</dbReference>
<dbReference type="NCBIfam" id="TIGR00973">
    <property type="entry name" value="leuA_bact"/>
    <property type="match status" value="1"/>
</dbReference>
<dbReference type="NCBIfam" id="NF002086">
    <property type="entry name" value="PRK00915.1-3"/>
    <property type="match status" value="1"/>
</dbReference>
<dbReference type="PANTHER" id="PTHR10277:SF9">
    <property type="entry name" value="2-ISOPROPYLMALATE SYNTHASE 1, CHLOROPLASTIC-RELATED"/>
    <property type="match status" value="1"/>
</dbReference>
<dbReference type="PANTHER" id="PTHR10277">
    <property type="entry name" value="HOMOCITRATE SYNTHASE-RELATED"/>
    <property type="match status" value="1"/>
</dbReference>
<dbReference type="Pfam" id="PF22617">
    <property type="entry name" value="HCS_D2"/>
    <property type="match status" value="1"/>
</dbReference>
<dbReference type="Pfam" id="PF00682">
    <property type="entry name" value="HMGL-like"/>
    <property type="match status" value="1"/>
</dbReference>
<dbReference type="Pfam" id="PF08502">
    <property type="entry name" value="LeuA_dimer"/>
    <property type="match status" value="1"/>
</dbReference>
<dbReference type="SMART" id="SM00917">
    <property type="entry name" value="LeuA_dimer"/>
    <property type="match status" value="1"/>
</dbReference>
<dbReference type="SUPFAM" id="SSF110921">
    <property type="entry name" value="2-isopropylmalate synthase LeuA, allosteric (dimerisation) domain"/>
    <property type="match status" value="1"/>
</dbReference>
<dbReference type="SUPFAM" id="SSF51569">
    <property type="entry name" value="Aldolase"/>
    <property type="match status" value="1"/>
</dbReference>
<dbReference type="PROSITE" id="PS00815">
    <property type="entry name" value="AIPM_HOMOCIT_SYNTH_1"/>
    <property type="match status" value="1"/>
</dbReference>
<dbReference type="PROSITE" id="PS00816">
    <property type="entry name" value="AIPM_HOMOCIT_SYNTH_2"/>
    <property type="match status" value="1"/>
</dbReference>
<dbReference type="PROSITE" id="PS50991">
    <property type="entry name" value="PYR_CT"/>
    <property type="match status" value="1"/>
</dbReference>
<reference key="1">
    <citation type="journal article" date="2005" name="Jpn. Agric. Res. Q.">
        <title>Genome sequence of Xanthomonas oryzae pv. oryzae suggests contribution of large numbers of effector genes and insertion sequences to its race diversity.</title>
        <authorList>
            <person name="Ochiai H."/>
            <person name="Inoue Y."/>
            <person name="Takeya M."/>
            <person name="Sasaki A."/>
            <person name="Kaku H."/>
        </authorList>
    </citation>
    <scope>NUCLEOTIDE SEQUENCE [LARGE SCALE GENOMIC DNA]</scope>
    <source>
        <strain>MAFF 311018</strain>
    </source>
</reference>
<sequence>MNTTISNQTPHIRIFDTTLRDGEQSPGCSMTPQQKLVMARALDELGVDIIETGFPASSHSDREAVAMMGRELRRPTLAVLSRCLQADIETSAKALETAANPRLHVFLSTSPLHREHKLRMSREQVLESVHRHVTLARGYIDDVEFSAEDATRTEEDFLAEVTRVAVAAGATTINLPDTVGFTTPEEIRGMFSRLIASVEGADKVIFSAHCHNDLGLAVANSLAAIEGGARQVECTINGIGERAGNCALEEITMALKVRGAFYNIDSAINTPRIVSTSQLLQRLVGMPVQRNKAVVGGNAFAHESGIHQHGMLRHRGTYEIMRPEDVGWESSQMVLGRHSGRAAVERRLRALGYLLEEEEVKLMFEQFKALCEKQRLVTDADLQALMQDATVQEGYRLASMTISDVGSRANALVELSDPEGNRVAETAQGNGPVDALFGALASATGVKLELDSYQVHSVGIGADARGEASLSVRHDGVEYEGTGTSKDIIEASALAWLDVANRLLRQRERGVIAGKTAAVA</sequence>
<accession>Q2P761</accession>
<organism>
    <name type="scientific">Xanthomonas oryzae pv. oryzae (strain MAFF 311018)</name>
    <dbReference type="NCBI Taxonomy" id="342109"/>
    <lineage>
        <taxon>Bacteria</taxon>
        <taxon>Pseudomonadati</taxon>
        <taxon>Pseudomonadota</taxon>
        <taxon>Gammaproteobacteria</taxon>
        <taxon>Lysobacterales</taxon>
        <taxon>Lysobacteraceae</taxon>
        <taxon>Xanthomonas</taxon>
    </lineage>
</organism>
<evidence type="ECO:0000255" key="1">
    <source>
        <dbReference type="HAMAP-Rule" id="MF_01025"/>
    </source>
</evidence>
<name>LEU1_XANOM</name>
<gene>
    <name evidence="1" type="primary">leuA</name>
    <name type="ordered locus">XOO0861</name>
</gene>
<proteinExistence type="inferred from homology"/>
<protein>
    <recommendedName>
        <fullName evidence="1">2-isopropylmalate synthase</fullName>
        <ecNumber evidence="1">2.3.3.13</ecNumber>
    </recommendedName>
    <alternativeName>
        <fullName evidence="1">Alpha-IPM synthase</fullName>
    </alternativeName>
    <alternativeName>
        <fullName evidence="1">Alpha-isopropylmalate synthase</fullName>
    </alternativeName>
</protein>
<keyword id="KW-0028">Amino-acid biosynthesis</keyword>
<keyword id="KW-0100">Branched-chain amino acid biosynthesis</keyword>
<keyword id="KW-0963">Cytoplasm</keyword>
<keyword id="KW-0432">Leucine biosynthesis</keyword>
<keyword id="KW-0464">Manganese</keyword>
<keyword id="KW-0479">Metal-binding</keyword>
<keyword id="KW-0808">Transferase</keyword>